<protein>
    <recommendedName>
        <fullName evidence="1">GMP synthase [glutamine-hydrolyzing]</fullName>
        <ecNumber evidence="1">6.3.5.2</ecNumber>
    </recommendedName>
    <alternativeName>
        <fullName evidence="1">GMP synthetase</fullName>
    </alternativeName>
    <alternativeName>
        <fullName evidence="1">Glutamine amidotransferase</fullName>
    </alternativeName>
</protein>
<sequence length="525" mass="58647">MTENIHKHRILILDFGSQYTQLVARRVRELGVYCELWAWDVTEAQIRDFNPSGIILSGGPESTTEENSPRAPQYVFEAGVPVFGVCYGMQTMAMQLGGHVEGSNEREFGYAQVEVLTDSALVRGIEDSLTADGKPLLDVWMSHGDKVTAIPSDFVTVASTESCPFAIMANEEKRFYGVQFHPEVTHTRQGMRMLERFVRDICQCEALWTPAKIIDDAVARIREQVGDDKVILGLSGGVDSSVTAMLLHCAIGKNLTCVFVDNGLLRLNEAEQVMDMFGDHFGLNIVHVPAEERFLSALAGENDPEAKRKIIGRVFVEVFDEEALKLEDVKWLAQGTIYPDVIESAASATGKAHVIKSHHNVGGLPKEMKMGLVEPLKELFKDEVRKIGLELGLPYDMLYRHPFPGPGLGVRVLGEVKKEYCDLLRRADAIFIEELRKADLYDKVSQAFTVFLPVRSVGVMGDGRKYDWVVSLRAVETIDFMTAHWAHLPYDFLGRVSNRIINEVNGISRVVYDISGKPPATIEWE</sequence>
<dbReference type="EC" id="6.3.5.2" evidence="1"/>
<dbReference type="EMBL" id="CP001127">
    <property type="protein sequence ID" value="ACF90046.1"/>
    <property type="molecule type" value="Genomic_DNA"/>
</dbReference>
<dbReference type="RefSeq" id="WP_000138292.1">
    <property type="nucleotide sequence ID" value="NC_011094.1"/>
</dbReference>
<dbReference type="SMR" id="B4TR83"/>
<dbReference type="MEROPS" id="C26.957"/>
<dbReference type="KEGG" id="sew:SeSA_A2744"/>
<dbReference type="HOGENOM" id="CLU_014340_0_5_6"/>
<dbReference type="UniPathway" id="UPA00189">
    <property type="reaction ID" value="UER00296"/>
</dbReference>
<dbReference type="Proteomes" id="UP000001865">
    <property type="component" value="Chromosome"/>
</dbReference>
<dbReference type="GO" id="GO:0005829">
    <property type="term" value="C:cytosol"/>
    <property type="evidence" value="ECO:0007669"/>
    <property type="project" value="TreeGrafter"/>
</dbReference>
<dbReference type="GO" id="GO:0005524">
    <property type="term" value="F:ATP binding"/>
    <property type="evidence" value="ECO:0007669"/>
    <property type="project" value="UniProtKB-UniRule"/>
</dbReference>
<dbReference type="GO" id="GO:0003921">
    <property type="term" value="F:GMP synthase activity"/>
    <property type="evidence" value="ECO:0007669"/>
    <property type="project" value="InterPro"/>
</dbReference>
<dbReference type="CDD" id="cd01742">
    <property type="entry name" value="GATase1_GMP_Synthase"/>
    <property type="match status" value="1"/>
</dbReference>
<dbReference type="CDD" id="cd01997">
    <property type="entry name" value="GMP_synthase_C"/>
    <property type="match status" value="1"/>
</dbReference>
<dbReference type="FunFam" id="3.30.300.10:FF:000002">
    <property type="entry name" value="GMP synthase [glutamine-hydrolyzing]"/>
    <property type="match status" value="1"/>
</dbReference>
<dbReference type="FunFam" id="3.40.50.620:FF:000001">
    <property type="entry name" value="GMP synthase [glutamine-hydrolyzing]"/>
    <property type="match status" value="1"/>
</dbReference>
<dbReference type="FunFam" id="3.40.50.880:FF:000001">
    <property type="entry name" value="GMP synthase [glutamine-hydrolyzing]"/>
    <property type="match status" value="1"/>
</dbReference>
<dbReference type="Gene3D" id="3.30.300.10">
    <property type="match status" value="1"/>
</dbReference>
<dbReference type="Gene3D" id="3.40.50.880">
    <property type="match status" value="1"/>
</dbReference>
<dbReference type="Gene3D" id="3.40.50.620">
    <property type="entry name" value="HUPs"/>
    <property type="match status" value="1"/>
</dbReference>
<dbReference type="HAMAP" id="MF_00344">
    <property type="entry name" value="GMP_synthase"/>
    <property type="match status" value="1"/>
</dbReference>
<dbReference type="InterPro" id="IPR029062">
    <property type="entry name" value="Class_I_gatase-like"/>
</dbReference>
<dbReference type="InterPro" id="IPR017926">
    <property type="entry name" value="GATASE"/>
</dbReference>
<dbReference type="InterPro" id="IPR001674">
    <property type="entry name" value="GMP_synth_C"/>
</dbReference>
<dbReference type="InterPro" id="IPR004739">
    <property type="entry name" value="GMP_synth_GATase"/>
</dbReference>
<dbReference type="InterPro" id="IPR022955">
    <property type="entry name" value="GMP_synthase"/>
</dbReference>
<dbReference type="InterPro" id="IPR025777">
    <property type="entry name" value="GMPS_ATP_PPase_dom"/>
</dbReference>
<dbReference type="InterPro" id="IPR022310">
    <property type="entry name" value="NAD/GMP_synthase"/>
</dbReference>
<dbReference type="InterPro" id="IPR014729">
    <property type="entry name" value="Rossmann-like_a/b/a_fold"/>
</dbReference>
<dbReference type="NCBIfam" id="TIGR00884">
    <property type="entry name" value="guaA_Cterm"/>
    <property type="match status" value="1"/>
</dbReference>
<dbReference type="NCBIfam" id="TIGR00888">
    <property type="entry name" value="guaA_Nterm"/>
    <property type="match status" value="1"/>
</dbReference>
<dbReference type="NCBIfam" id="NF000848">
    <property type="entry name" value="PRK00074.1"/>
    <property type="match status" value="1"/>
</dbReference>
<dbReference type="PANTHER" id="PTHR11922:SF2">
    <property type="entry name" value="GMP SYNTHASE [GLUTAMINE-HYDROLYZING]"/>
    <property type="match status" value="1"/>
</dbReference>
<dbReference type="PANTHER" id="PTHR11922">
    <property type="entry name" value="GMP SYNTHASE-RELATED"/>
    <property type="match status" value="1"/>
</dbReference>
<dbReference type="Pfam" id="PF00117">
    <property type="entry name" value="GATase"/>
    <property type="match status" value="1"/>
</dbReference>
<dbReference type="Pfam" id="PF00958">
    <property type="entry name" value="GMP_synt_C"/>
    <property type="match status" value="1"/>
</dbReference>
<dbReference type="Pfam" id="PF02540">
    <property type="entry name" value="NAD_synthase"/>
    <property type="match status" value="1"/>
</dbReference>
<dbReference type="PRINTS" id="PR00097">
    <property type="entry name" value="ANTSNTHASEII"/>
</dbReference>
<dbReference type="PRINTS" id="PR00099">
    <property type="entry name" value="CPSGATASE"/>
</dbReference>
<dbReference type="PRINTS" id="PR00096">
    <property type="entry name" value="GATASE"/>
</dbReference>
<dbReference type="SUPFAM" id="SSF52402">
    <property type="entry name" value="Adenine nucleotide alpha hydrolases-like"/>
    <property type="match status" value="1"/>
</dbReference>
<dbReference type="SUPFAM" id="SSF52317">
    <property type="entry name" value="Class I glutamine amidotransferase-like"/>
    <property type="match status" value="1"/>
</dbReference>
<dbReference type="SUPFAM" id="SSF54810">
    <property type="entry name" value="GMP synthetase C-terminal dimerisation domain"/>
    <property type="match status" value="1"/>
</dbReference>
<dbReference type="PROSITE" id="PS51273">
    <property type="entry name" value="GATASE_TYPE_1"/>
    <property type="match status" value="1"/>
</dbReference>
<dbReference type="PROSITE" id="PS51553">
    <property type="entry name" value="GMPS_ATP_PPASE"/>
    <property type="match status" value="1"/>
</dbReference>
<reference key="1">
    <citation type="journal article" date="2011" name="J. Bacteriol.">
        <title>Comparative genomics of 28 Salmonella enterica isolates: evidence for CRISPR-mediated adaptive sublineage evolution.</title>
        <authorList>
            <person name="Fricke W.F."/>
            <person name="Mammel M.K."/>
            <person name="McDermott P.F."/>
            <person name="Tartera C."/>
            <person name="White D.G."/>
            <person name="Leclerc J.E."/>
            <person name="Ravel J."/>
            <person name="Cebula T.A."/>
        </authorList>
    </citation>
    <scope>NUCLEOTIDE SEQUENCE [LARGE SCALE GENOMIC DNA]</scope>
    <source>
        <strain>CVM19633</strain>
    </source>
</reference>
<gene>
    <name evidence="1" type="primary">guaA</name>
    <name type="ordered locus">SeSA_A2744</name>
</gene>
<feature type="chain" id="PRO_1000120395" description="GMP synthase [glutamine-hydrolyzing]">
    <location>
        <begin position="1"/>
        <end position="525"/>
    </location>
</feature>
<feature type="domain" description="Glutamine amidotransferase type-1" evidence="1">
    <location>
        <begin position="9"/>
        <end position="207"/>
    </location>
</feature>
<feature type="domain" description="GMPS ATP-PPase" evidence="1">
    <location>
        <begin position="208"/>
        <end position="400"/>
    </location>
</feature>
<feature type="active site" description="Nucleophile" evidence="1">
    <location>
        <position position="86"/>
    </location>
</feature>
<feature type="active site" evidence="1">
    <location>
        <position position="181"/>
    </location>
</feature>
<feature type="active site" evidence="1">
    <location>
        <position position="183"/>
    </location>
</feature>
<feature type="binding site" evidence="1">
    <location>
        <begin position="235"/>
        <end position="241"/>
    </location>
    <ligand>
        <name>ATP</name>
        <dbReference type="ChEBI" id="CHEBI:30616"/>
    </ligand>
</feature>
<accession>B4TR83</accession>
<evidence type="ECO:0000255" key="1">
    <source>
        <dbReference type="HAMAP-Rule" id="MF_00344"/>
    </source>
</evidence>
<organism>
    <name type="scientific">Salmonella schwarzengrund (strain CVM19633)</name>
    <dbReference type="NCBI Taxonomy" id="439843"/>
    <lineage>
        <taxon>Bacteria</taxon>
        <taxon>Pseudomonadati</taxon>
        <taxon>Pseudomonadota</taxon>
        <taxon>Gammaproteobacteria</taxon>
        <taxon>Enterobacterales</taxon>
        <taxon>Enterobacteriaceae</taxon>
        <taxon>Salmonella</taxon>
    </lineage>
</organism>
<keyword id="KW-0067">ATP-binding</keyword>
<keyword id="KW-0315">Glutamine amidotransferase</keyword>
<keyword id="KW-0332">GMP biosynthesis</keyword>
<keyword id="KW-0436">Ligase</keyword>
<keyword id="KW-0547">Nucleotide-binding</keyword>
<keyword id="KW-0658">Purine biosynthesis</keyword>
<comment type="function">
    <text evidence="1">Catalyzes the synthesis of GMP from XMP.</text>
</comment>
<comment type="catalytic activity">
    <reaction evidence="1">
        <text>XMP + L-glutamine + ATP + H2O = GMP + L-glutamate + AMP + diphosphate + 2 H(+)</text>
        <dbReference type="Rhea" id="RHEA:11680"/>
        <dbReference type="ChEBI" id="CHEBI:15377"/>
        <dbReference type="ChEBI" id="CHEBI:15378"/>
        <dbReference type="ChEBI" id="CHEBI:29985"/>
        <dbReference type="ChEBI" id="CHEBI:30616"/>
        <dbReference type="ChEBI" id="CHEBI:33019"/>
        <dbReference type="ChEBI" id="CHEBI:57464"/>
        <dbReference type="ChEBI" id="CHEBI:58115"/>
        <dbReference type="ChEBI" id="CHEBI:58359"/>
        <dbReference type="ChEBI" id="CHEBI:456215"/>
        <dbReference type="EC" id="6.3.5.2"/>
    </reaction>
</comment>
<comment type="pathway">
    <text evidence="1">Purine metabolism; GMP biosynthesis; GMP from XMP (L-Gln route): step 1/1.</text>
</comment>
<comment type="subunit">
    <text evidence="1">Homodimer.</text>
</comment>
<name>GUAA_SALSV</name>
<proteinExistence type="inferred from homology"/>